<dbReference type="EMBL" id="AAFI02000072">
    <property type="protein sequence ID" value="EAL65013.1"/>
    <property type="molecule type" value="Genomic_DNA"/>
</dbReference>
<dbReference type="RefSeq" id="XP_638372.1">
    <property type="nucleotide sequence ID" value="XM_633280.1"/>
</dbReference>
<dbReference type="SMR" id="Q54P23"/>
<dbReference type="FunCoup" id="Q54P23">
    <property type="interactions" value="467"/>
</dbReference>
<dbReference type="STRING" id="44689.Q54P23"/>
<dbReference type="GlyGen" id="Q54P23">
    <property type="glycosylation" value="1 site"/>
</dbReference>
<dbReference type="PaxDb" id="44689-DDB0186222"/>
<dbReference type="EnsemblProtists" id="EAL65013">
    <property type="protein sequence ID" value="EAL65013"/>
    <property type="gene ID" value="DDB_G0284847"/>
</dbReference>
<dbReference type="GeneID" id="8624805"/>
<dbReference type="KEGG" id="ddi:DDB_G0284847"/>
<dbReference type="dictyBase" id="DDB_G0284847"/>
<dbReference type="VEuPathDB" id="AmoebaDB:DDB_G0284847"/>
<dbReference type="eggNOG" id="KOG3358">
    <property type="taxonomic scope" value="Eukaryota"/>
</dbReference>
<dbReference type="HOGENOM" id="CLU_078126_0_0_1"/>
<dbReference type="InParanoid" id="Q54P23"/>
<dbReference type="OMA" id="NYWRAME"/>
<dbReference type="PhylomeDB" id="Q54P23"/>
<dbReference type="PRO" id="PR:Q54P23"/>
<dbReference type="Proteomes" id="UP000002195">
    <property type="component" value="Chromosome 4"/>
</dbReference>
<dbReference type="GO" id="GO:0005576">
    <property type="term" value="C:extracellular region"/>
    <property type="evidence" value="ECO:0007669"/>
    <property type="project" value="UniProtKB-SubCell"/>
</dbReference>
<dbReference type="Gene3D" id="2.80.10.50">
    <property type="match status" value="1"/>
</dbReference>
<dbReference type="InterPro" id="IPR036300">
    <property type="entry name" value="MIR_dom_sf"/>
</dbReference>
<dbReference type="InterPro" id="IPR016093">
    <property type="entry name" value="MIR_motif"/>
</dbReference>
<dbReference type="PANTHER" id="PTHR46809:SF2">
    <property type="entry name" value="GH21273P"/>
    <property type="match status" value="1"/>
</dbReference>
<dbReference type="PANTHER" id="PTHR46809">
    <property type="entry name" value="STROMAL CELL-DERIVED FACTOR 2-LIKE PROTEIN"/>
    <property type="match status" value="1"/>
</dbReference>
<dbReference type="Pfam" id="PF02815">
    <property type="entry name" value="MIR"/>
    <property type="match status" value="1"/>
</dbReference>
<dbReference type="SMART" id="SM00472">
    <property type="entry name" value="MIR"/>
    <property type="match status" value="3"/>
</dbReference>
<dbReference type="SUPFAM" id="SSF82109">
    <property type="entry name" value="MIR domain"/>
    <property type="match status" value="1"/>
</dbReference>
<dbReference type="PROSITE" id="PS50919">
    <property type="entry name" value="MIR"/>
    <property type="match status" value="3"/>
</dbReference>
<reference key="1">
    <citation type="journal article" date="2005" name="Nature">
        <title>The genome of the social amoeba Dictyostelium discoideum.</title>
        <authorList>
            <person name="Eichinger L."/>
            <person name="Pachebat J.A."/>
            <person name="Gloeckner G."/>
            <person name="Rajandream M.A."/>
            <person name="Sucgang R."/>
            <person name="Berriman M."/>
            <person name="Song J."/>
            <person name="Olsen R."/>
            <person name="Szafranski K."/>
            <person name="Xu Q."/>
            <person name="Tunggal B."/>
            <person name="Kummerfeld S."/>
            <person name="Madera M."/>
            <person name="Konfortov B.A."/>
            <person name="Rivero F."/>
            <person name="Bankier A.T."/>
            <person name="Lehmann R."/>
            <person name="Hamlin N."/>
            <person name="Davies R."/>
            <person name="Gaudet P."/>
            <person name="Fey P."/>
            <person name="Pilcher K."/>
            <person name="Chen G."/>
            <person name="Saunders D."/>
            <person name="Sodergren E.J."/>
            <person name="Davis P."/>
            <person name="Kerhornou A."/>
            <person name="Nie X."/>
            <person name="Hall N."/>
            <person name="Anjard C."/>
            <person name="Hemphill L."/>
            <person name="Bason N."/>
            <person name="Farbrother P."/>
            <person name="Desany B."/>
            <person name="Just E."/>
            <person name="Morio T."/>
            <person name="Rost R."/>
            <person name="Churcher C.M."/>
            <person name="Cooper J."/>
            <person name="Haydock S."/>
            <person name="van Driessche N."/>
            <person name="Cronin A."/>
            <person name="Goodhead I."/>
            <person name="Muzny D.M."/>
            <person name="Mourier T."/>
            <person name="Pain A."/>
            <person name="Lu M."/>
            <person name="Harper D."/>
            <person name="Lindsay R."/>
            <person name="Hauser H."/>
            <person name="James K.D."/>
            <person name="Quiles M."/>
            <person name="Madan Babu M."/>
            <person name="Saito T."/>
            <person name="Buchrieser C."/>
            <person name="Wardroper A."/>
            <person name="Felder M."/>
            <person name="Thangavelu M."/>
            <person name="Johnson D."/>
            <person name="Knights A."/>
            <person name="Loulseged H."/>
            <person name="Mungall K.L."/>
            <person name="Oliver K."/>
            <person name="Price C."/>
            <person name="Quail M.A."/>
            <person name="Urushihara H."/>
            <person name="Hernandez J."/>
            <person name="Rabbinowitsch E."/>
            <person name="Steffen D."/>
            <person name="Sanders M."/>
            <person name="Ma J."/>
            <person name="Kohara Y."/>
            <person name="Sharp S."/>
            <person name="Simmonds M.N."/>
            <person name="Spiegler S."/>
            <person name="Tivey A."/>
            <person name="Sugano S."/>
            <person name="White B."/>
            <person name="Walker D."/>
            <person name="Woodward J.R."/>
            <person name="Winckler T."/>
            <person name="Tanaka Y."/>
            <person name="Shaulsky G."/>
            <person name="Schleicher M."/>
            <person name="Weinstock G.M."/>
            <person name="Rosenthal A."/>
            <person name="Cox E.C."/>
            <person name="Chisholm R.L."/>
            <person name="Gibbs R.A."/>
            <person name="Loomis W.F."/>
            <person name="Platzer M."/>
            <person name="Kay R.R."/>
            <person name="Williams J.G."/>
            <person name="Dear P.H."/>
            <person name="Noegel A.A."/>
            <person name="Barrell B.G."/>
            <person name="Kuspa A."/>
        </authorList>
    </citation>
    <scope>NUCLEOTIDE SEQUENCE [LARGE SCALE GENOMIC DNA]</scope>
    <source>
        <strain>AX4</strain>
    </source>
</reference>
<proteinExistence type="inferred from homology"/>
<sequence length="212" mass="23586">MKSLFLILILCITIPLIFANESQYEDHPITKVTYGSMVKLAHVPTNFRLHSHKVSYGSSGGGSGQQSVTGFPENDDTNSLWVIKGPHGNRVLQGTVVKNGDIIRLVHSNTKKNLHSHLAVSPLTKQNEVSCFGENGEGDTGDNWIVETESGKEWMRGQVVRFKHADTKTYLQAIESAKYQNPIPGQIEISGGKSKNEDTKWRTEEGIYFDEK</sequence>
<protein>
    <recommendedName>
        <fullName>Stromal cell-derived factor 2-like protein</fullName>
        <shortName>SDF2-like protein</shortName>
    </recommendedName>
</protein>
<organism>
    <name type="scientific">Dictyostelium discoideum</name>
    <name type="common">Social amoeba</name>
    <dbReference type="NCBI Taxonomy" id="44689"/>
    <lineage>
        <taxon>Eukaryota</taxon>
        <taxon>Amoebozoa</taxon>
        <taxon>Evosea</taxon>
        <taxon>Eumycetozoa</taxon>
        <taxon>Dictyostelia</taxon>
        <taxon>Dictyosteliales</taxon>
        <taxon>Dictyosteliaceae</taxon>
        <taxon>Dictyostelium</taxon>
    </lineage>
</organism>
<accession>Q54P23</accession>
<evidence type="ECO:0000250" key="1"/>
<evidence type="ECO:0000255" key="2"/>
<evidence type="ECO:0000255" key="3">
    <source>
        <dbReference type="PROSITE-ProRule" id="PRU00131"/>
    </source>
</evidence>
<feature type="signal peptide" evidence="2">
    <location>
        <begin position="1"/>
        <end position="19"/>
    </location>
</feature>
<feature type="chain" id="PRO_0000331217" description="Stromal cell-derived factor 2-like protein">
    <location>
        <begin position="20"/>
        <end position="212"/>
    </location>
</feature>
<feature type="domain" description="MIR 1" evidence="3">
    <location>
        <begin position="29"/>
        <end position="86"/>
    </location>
</feature>
<feature type="domain" description="MIR 2" evidence="3">
    <location>
        <begin position="94"/>
        <end position="149"/>
    </location>
</feature>
<feature type="domain" description="MIR 3" evidence="3">
    <location>
        <begin position="151"/>
        <end position="206"/>
    </location>
</feature>
<feature type="glycosylation site" description="N-linked (GlcNAc...) asparagine" evidence="2">
    <location>
        <position position="20"/>
    </location>
</feature>
<keyword id="KW-0325">Glycoprotein</keyword>
<keyword id="KW-1185">Reference proteome</keyword>
<keyword id="KW-0677">Repeat</keyword>
<keyword id="KW-0964">Secreted</keyword>
<keyword id="KW-0732">Signal</keyword>
<comment type="subcellular location">
    <subcellularLocation>
        <location evidence="1">Secreted</location>
    </subcellularLocation>
</comment>
<name>SDF2_DICDI</name>
<gene>
    <name type="ORF">DDB_G0284847</name>
</gene>